<sequence>MSLKSEHRVNTSALQKIAADMSNLIDNLDTRELHFEGEEVEFDTSPGDPKAQEKYIPFSSIYNTQGFKEPNIQTYLSGCPIKAQVLEVERFTSTTRVPSINLYTIELTHGEFTWQVKRKFKHFQEFHRELLKYKAFIRIPIPTKRHTFRRQNVKEEPREMPSLPRSSENTIQEEQFFGRRKQLEDYLTKILKMPMYRNYHATTEFLDVSQLSFIHDLGPKGLEGMIMKRSGGHRIPGLNCCGQGRACYRWSKRWLIVKDSFLLYMKPDSGAIAFVLLVDKEFRIKVGRKETETKYGLRIDNLSRTLILKCNSYRHARWWGGAIEEFIQKHGSDFLKDHRFGSYAAVHENMLAKWYVNAKGYFEDIANAMEEAAEEIFITDWWLSPEIFLKRPVVEGNRWRLDCILKRKAQQGVRIFIMLYKEVELALGINSEYSKRTLMRLHPNIKVMRHPDHVSSSVYLWAHHEKLVIIDQSVAFVGGIDLAYGRWDDNEHRLTDVGSVKRVTSGLSMGSLAAATMESMESLSLKDNHRSHKNEPILKSVDDVDPKLKGVGKPRKFSKFSLYRQLHRRHLHNSDSVSSIDSASNTGSIRSVQTGVGELHGETRFWHGKDYCNFVFKDWVQLDKPFADFIDRYSTPRIPWHDIGSVLHGKAARDVARHFIQRWNFTKIMKPKYRSLSYPFLLPKSQSTAHELRYQVPGAVPAKVQLLRSAADWSAGIKHHEESIHSAYINVIENSKHYIYIENQFFISCADDKVVFNKVGDAIAQRILKAHREGQRYRVYIVIPRLPGFEGDISTGGGNALQAIMHFNYRTMCRGENSILGQLKPELGNQWINYISFCGLRTHAELEGNLVTELIYVHSKLLIADDNTVIIGSANINDRSMLGKRDSEMAVIVQDTETVPSIMDGKEYQAGCFAQGLRLQCFRLVLGYLSDPSEDLQDPVSDKFFKEIWVSTAARNATIYDKVFRCLPNDEVHNLMQLRDFISKPILAKDDPIRAEEELRKIRGFLVQFPFYFLSEENLLPSVGTKEAIVPMEVWT</sequence>
<reference key="1">
    <citation type="submission" date="1997-03" db="EMBL/GenBank/DDBJ databases">
        <authorList>
            <person name="Klaus J.R."/>
            <person name="Baldassare J.J."/>
            <person name="Raben D.M."/>
        </authorList>
    </citation>
    <scope>NUCLEOTIDE SEQUENCE [MRNA]</scope>
</reference>
<organism>
    <name type="scientific">Cricetulus griseus</name>
    <name type="common">Chinese hamster</name>
    <name type="synonym">Cricetulus barabensis griseus</name>
    <dbReference type="NCBI Taxonomy" id="10029"/>
    <lineage>
        <taxon>Eukaryota</taxon>
        <taxon>Metazoa</taxon>
        <taxon>Chordata</taxon>
        <taxon>Craniata</taxon>
        <taxon>Vertebrata</taxon>
        <taxon>Euteleostomi</taxon>
        <taxon>Mammalia</taxon>
        <taxon>Eutheria</taxon>
        <taxon>Euarchontoglires</taxon>
        <taxon>Glires</taxon>
        <taxon>Rodentia</taxon>
        <taxon>Myomorpha</taxon>
        <taxon>Muroidea</taxon>
        <taxon>Cricetidae</taxon>
        <taxon>Cricetinae</taxon>
        <taxon>Cricetulus</taxon>
    </lineage>
</organism>
<proteinExistence type="evidence at transcript level"/>
<feature type="chain" id="PRO_0000218801" description="Phospholipase D1">
    <location>
        <begin position="1"/>
        <end position="1036"/>
    </location>
</feature>
<feature type="domain" description="PX" evidence="4">
    <location>
        <begin position="81"/>
        <end position="212"/>
    </location>
</feature>
<feature type="domain" description="PH">
    <location>
        <begin position="219"/>
        <end position="328"/>
    </location>
</feature>
<feature type="domain" description="PLD phosphodiesterase 1" evidence="5">
    <location>
        <begin position="459"/>
        <end position="486"/>
    </location>
</feature>
<feature type="domain" description="PLD phosphodiesterase 2" evidence="5">
    <location>
        <begin position="853"/>
        <end position="880"/>
    </location>
</feature>
<feature type="region of interest" description="Catalytic">
    <location>
        <begin position="463"/>
        <end position="890"/>
    </location>
</feature>
<feature type="modified residue" description="Phosphoserine" evidence="2">
    <location>
        <position position="499"/>
    </location>
</feature>
<feature type="modified residue" description="Phosphoserine" evidence="3">
    <location>
        <position position="561"/>
    </location>
</feature>
<feature type="modified residue" description="Phosphoserine" evidence="3">
    <location>
        <position position="591"/>
    </location>
</feature>
<feature type="lipid moiety-binding region" description="S-palmitoyl cysteine" evidence="1">
    <location>
        <position position="240"/>
    </location>
</feature>
<feature type="lipid moiety-binding region" description="S-palmitoyl cysteine" evidence="1">
    <location>
        <position position="241"/>
    </location>
</feature>
<evidence type="ECO:0000250" key="1"/>
<evidence type="ECO:0000250" key="2">
    <source>
        <dbReference type="UniProtKB" id="P70496"/>
    </source>
</evidence>
<evidence type="ECO:0000250" key="3">
    <source>
        <dbReference type="UniProtKB" id="Q13393"/>
    </source>
</evidence>
<evidence type="ECO:0000255" key="4">
    <source>
        <dbReference type="PROSITE-ProRule" id="PRU00147"/>
    </source>
</evidence>
<evidence type="ECO:0000255" key="5">
    <source>
        <dbReference type="PROSITE-ProRule" id="PRU00153"/>
    </source>
</evidence>
<evidence type="ECO:0000305" key="6"/>
<protein>
    <recommendedName>
        <fullName>Phospholipase D1</fullName>
        <shortName>PLD 1</shortName>
        <ecNumber>3.1.4.4</ecNumber>
    </recommendedName>
    <alternativeName>
        <fullName>Choline phosphatase 1</fullName>
    </alternativeName>
    <alternativeName>
        <fullName>Phosphatidylcholine-hydrolyzing phospholipase D1</fullName>
    </alternativeName>
</protein>
<keyword id="KW-0963">Cytoplasm</keyword>
<keyword id="KW-0256">Endoplasmic reticulum</keyword>
<keyword id="KW-0967">Endosome</keyword>
<keyword id="KW-0333">Golgi apparatus</keyword>
<keyword id="KW-0378">Hydrolase</keyword>
<keyword id="KW-0442">Lipid degradation</keyword>
<keyword id="KW-0443">Lipid metabolism</keyword>
<keyword id="KW-0449">Lipoprotein</keyword>
<keyword id="KW-0472">Membrane</keyword>
<keyword id="KW-0564">Palmitate</keyword>
<keyword id="KW-0597">Phosphoprotein</keyword>
<keyword id="KW-0677">Repeat</keyword>
<accession>O08684</accession>
<comment type="function">
    <text evidence="1">Implicated as a critical step in numerous cellular pathways, including signal transduction, membrane trafficking, and the regulation of mitosis. May be involved in the regulation of perinuclear intravesicular membrane traffic (By similarity).</text>
</comment>
<comment type="catalytic activity">
    <reaction>
        <text>a 1,2-diacyl-sn-glycero-3-phosphocholine + H2O = a 1,2-diacyl-sn-glycero-3-phosphate + choline + H(+)</text>
        <dbReference type="Rhea" id="RHEA:14445"/>
        <dbReference type="ChEBI" id="CHEBI:15354"/>
        <dbReference type="ChEBI" id="CHEBI:15377"/>
        <dbReference type="ChEBI" id="CHEBI:15378"/>
        <dbReference type="ChEBI" id="CHEBI:57643"/>
        <dbReference type="ChEBI" id="CHEBI:58608"/>
        <dbReference type="EC" id="3.1.4.4"/>
    </reaction>
</comment>
<comment type="activity regulation">
    <text evidence="1">Stimulated by phosphatidylinositol 4,5-bisphosphate and phosphatidylinositol 3,4,5-trisphosphate, activated by the phosphokinase C-alpha, by the ADP-ribosylation factor-1 (ARF-1), and to a lesser extent by GTP-binding proteins: RHO A, RAC-1 and CDC42.</text>
</comment>
<comment type="subunit">
    <text evidence="1">Interacts with PIP5K1B.</text>
</comment>
<comment type="subcellular location">
    <subcellularLocation>
        <location evidence="1">Cytoplasm</location>
        <location evidence="1">Perinuclear region</location>
    </subcellularLocation>
    <subcellularLocation>
        <location evidence="1">Endoplasmic reticulum membrane</location>
        <topology evidence="1">Lipid-anchor</topology>
        <orientation evidence="1">Cytoplasmic side</orientation>
    </subcellularLocation>
    <subcellularLocation>
        <location evidence="1">Golgi apparatus membrane</location>
        <topology evidence="1">Lipid-anchor</topology>
        <orientation evidence="1">Cytoplasmic side</orientation>
    </subcellularLocation>
    <subcellularLocation>
        <location evidence="1">Late endosome membrane</location>
        <topology evidence="1">Lipid-anchor</topology>
        <orientation evidence="1">Cytoplasmic side</orientation>
    </subcellularLocation>
</comment>
<comment type="similarity">
    <text evidence="6">Belongs to the phospholipase D family.</text>
</comment>
<name>PLD1_CRIGR</name>
<dbReference type="EC" id="3.1.4.4"/>
<dbReference type="EMBL" id="U94995">
    <property type="protein sequence ID" value="AAB53631.1"/>
    <property type="molecule type" value="mRNA"/>
</dbReference>
<dbReference type="PIR" id="T18530">
    <property type="entry name" value="T18530"/>
</dbReference>
<dbReference type="RefSeq" id="NP_001233757.1">
    <property type="nucleotide sequence ID" value="NM_001246828.1"/>
</dbReference>
<dbReference type="SMR" id="O08684"/>
<dbReference type="PaxDb" id="10029-NP_001233757.1"/>
<dbReference type="GeneID" id="100689404"/>
<dbReference type="KEGG" id="cge:100689404"/>
<dbReference type="CTD" id="5337"/>
<dbReference type="eggNOG" id="KOG1329">
    <property type="taxonomic scope" value="Eukaryota"/>
</dbReference>
<dbReference type="OrthoDB" id="14911at2759"/>
<dbReference type="Proteomes" id="UP000694386">
    <property type="component" value="Unplaced"/>
</dbReference>
<dbReference type="Proteomes" id="UP001108280">
    <property type="component" value="Chromosome 1"/>
</dbReference>
<dbReference type="GO" id="GO:0005789">
    <property type="term" value="C:endoplasmic reticulum membrane"/>
    <property type="evidence" value="ECO:0007669"/>
    <property type="project" value="UniProtKB-SubCell"/>
</dbReference>
<dbReference type="GO" id="GO:0000139">
    <property type="term" value="C:Golgi membrane"/>
    <property type="evidence" value="ECO:0007669"/>
    <property type="project" value="UniProtKB-SubCell"/>
</dbReference>
<dbReference type="GO" id="GO:0031902">
    <property type="term" value="C:late endosome membrane"/>
    <property type="evidence" value="ECO:0007669"/>
    <property type="project" value="UniProtKB-SubCell"/>
</dbReference>
<dbReference type="GO" id="GO:0048471">
    <property type="term" value="C:perinuclear region of cytoplasm"/>
    <property type="evidence" value="ECO:0007669"/>
    <property type="project" value="UniProtKB-SubCell"/>
</dbReference>
<dbReference type="GO" id="GO:0035091">
    <property type="term" value="F:phosphatidylinositol binding"/>
    <property type="evidence" value="ECO:0007669"/>
    <property type="project" value="InterPro"/>
</dbReference>
<dbReference type="GO" id="GO:0004630">
    <property type="term" value="F:phospholipase D activity"/>
    <property type="evidence" value="ECO:0007669"/>
    <property type="project" value="UniProtKB-EC"/>
</dbReference>
<dbReference type="GO" id="GO:0035556">
    <property type="term" value="P:intracellular signal transduction"/>
    <property type="evidence" value="ECO:0007669"/>
    <property type="project" value="InterPro"/>
</dbReference>
<dbReference type="GO" id="GO:0006654">
    <property type="term" value="P:phosphatidic acid biosynthetic process"/>
    <property type="evidence" value="ECO:0007669"/>
    <property type="project" value="InterPro"/>
</dbReference>
<dbReference type="GO" id="GO:0009395">
    <property type="term" value="P:phospholipid catabolic process"/>
    <property type="evidence" value="ECO:0007669"/>
    <property type="project" value="TreeGrafter"/>
</dbReference>
<dbReference type="GO" id="GO:0032534">
    <property type="term" value="P:regulation of microvillus assembly"/>
    <property type="evidence" value="ECO:0007669"/>
    <property type="project" value="TreeGrafter"/>
</dbReference>
<dbReference type="GO" id="GO:0060627">
    <property type="term" value="P:regulation of vesicle-mediated transport"/>
    <property type="evidence" value="ECO:0007669"/>
    <property type="project" value="TreeGrafter"/>
</dbReference>
<dbReference type="CDD" id="cd01254">
    <property type="entry name" value="PH_PLD"/>
    <property type="match status" value="1"/>
</dbReference>
<dbReference type="CDD" id="cd09844">
    <property type="entry name" value="PLDc_vPLD1_2"/>
    <property type="match status" value="1"/>
</dbReference>
<dbReference type="CDD" id="cd07296">
    <property type="entry name" value="PX_PLD1"/>
    <property type="match status" value="1"/>
</dbReference>
<dbReference type="FunFam" id="2.30.29.30:FF:000114">
    <property type="entry name" value="Phospholipase"/>
    <property type="match status" value="1"/>
</dbReference>
<dbReference type="FunFam" id="3.30.1520.10:FF:000021">
    <property type="entry name" value="Phospholipase"/>
    <property type="match status" value="1"/>
</dbReference>
<dbReference type="FunFam" id="3.30.870.10:FF:000005">
    <property type="entry name" value="Phospholipase"/>
    <property type="match status" value="1"/>
</dbReference>
<dbReference type="FunFam" id="3.30.870.10:FF:000009">
    <property type="entry name" value="Phospholipase"/>
    <property type="match status" value="1"/>
</dbReference>
<dbReference type="FunFam" id="3.30.870.10:FF:000018">
    <property type="entry name" value="Phospholipase"/>
    <property type="match status" value="1"/>
</dbReference>
<dbReference type="Gene3D" id="3.30.870.10">
    <property type="entry name" value="Endonuclease Chain A"/>
    <property type="match status" value="3"/>
</dbReference>
<dbReference type="Gene3D" id="3.30.1520.10">
    <property type="entry name" value="Phox-like domain"/>
    <property type="match status" value="1"/>
</dbReference>
<dbReference type="Gene3D" id="2.30.29.30">
    <property type="entry name" value="Pleckstrin-homology domain (PH domain)/Phosphotyrosine-binding domain (PTB)"/>
    <property type="match status" value="1"/>
</dbReference>
<dbReference type="InterPro" id="IPR011993">
    <property type="entry name" value="PH-like_dom_sf"/>
</dbReference>
<dbReference type="InterPro" id="IPR001849">
    <property type="entry name" value="PH_domain"/>
</dbReference>
<dbReference type="InterPro" id="IPR025202">
    <property type="entry name" value="PLD-like_dom"/>
</dbReference>
<dbReference type="InterPro" id="IPR001736">
    <property type="entry name" value="PLipase_D/transphosphatidylase"/>
</dbReference>
<dbReference type="InterPro" id="IPR016555">
    <property type="entry name" value="PLipase_D_euk"/>
</dbReference>
<dbReference type="InterPro" id="IPR015679">
    <property type="entry name" value="PLipase_D_fam"/>
</dbReference>
<dbReference type="InterPro" id="IPR001683">
    <property type="entry name" value="PX_dom"/>
</dbReference>
<dbReference type="InterPro" id="IPR036871">
    <property type="entry name" value="PX_dom_sf"/>
</dbReference>
<dbReference type="PANTHER" id="PTHR18896">
    <property type="entry name" value="PHOSPHOLIPASE D"/>
    <property type="match status" value="1"/>
</dbReference>
<dbReference type="PANTHER" id="PTHR18896:SF57">
    <property type="entry name" value="PHOSPHOLIPASE D1"/>
    <property type="match status" value="1"/>
</dbReference>
<dbReference type="Pfam" id="PF00169">
    <property type="entry name" value="PH"/>
    <property type="match status" value="1"/>
</dbReference>
<dbReference type="Pfam" id="PF00614">
    <property type="entry name" value="PLDc"/>
    <property type="match status" value="1"/>
</dbReference>
<dbReference type="Pfam" id="PF13091">
    <property type="entry name" value="PLDc_2"/>
    <property type="match status" value="1"/>
</dbReference>
<dbReference type="Pfam" id="PF00787">
    <property type="entry name" value="PX"/>
    <property type="match status" value="1"/>
</dbReference>
<dbReference type="PIRSF" id="PIRSF009376">
    <property type="entry name" value="Phospholipase_D_euk"/>
    <property type="match status" value="1"/>
</dbReference>
<dbReference type="SMART" id="SM00233">
    <property type="entry name" value="PH"/>
    <property type="match status" value="1"/>
</dbReference>
<dbReference type="SMART" id="SM00155">
    <property type="entry name" value="PLDc"/>
    <property type="match status" value="2"/>
</dbReference>
<dbReference type="SMART" id="SM00312">
    <property type="entry name" value="PX"/>
    <property type="match status" value="1"/>
</dbReference>
<dbReference type="SUPFAM" id="SSF50729">
    <property type="entry name" value="PH domain-like"/>
    <property type="match status" value="1"/>
</dbReference>
<dbReference type="SUPFAM" id="SSF56024">
    <property type="entry name" value="Phospholipase D/nuclease"/>
    <property type="match status" value="3"/>
</dbReference>
<dbReference type="SUPFAM" id="SSF64268">
    <property type="entry name" value="PX domain"/>
    <property type="match status" value="1"/>
</dbReference>
<dbReference type="PROSITE" id="PS50035">
    <property type="entry name" value="PLD"/>
    <property type="match status" value="2"/>
</dbReference>
<dbReference type="PROSITE" id="PS50195">
    <property type="entry name" value="PX"/>
    <property type="match status" value="1"/>
</dbReference>
<gene>
    <name type="primary">PLD1</name>
</gene>